<dbReference type="EC" id="2.1.2.1" evidence="1"/>
<dbReference type="EMBL" id="CP001034">
    <property type="protein sequence ID" value="ACB86405.1"/>
    <property type="molecule type" value="Genomic_DNA"/>
</dbReference>
<dbReference type="RefSeq" id="WP_012449237.1">
    <property type="nucleotide sequence ID" value="NC_010718.1"/>
</dbReference>
<dbReference type="SMR" id="B2A3H6"/>
<dbReference type="FunCoup" id="B2A3H6">
    <property type="interactions" value="403"/>
</dbReference>
<dbReference type="STRING" id="457570.Nther_2858"/>
<dbReference type="KEGG" id="nth:Nther_2858"/>
<dbReference type="eggNOG" id="COG0112">
    <property type="taxonomic scope" value="Bacteria"/>
</dbReference>
<dbReference type="HOGENOM" id="CLU_022477_2_1_9"/>
<dbReference type="InParanoid" id="B2A3H6"/>
<dbReference type="OrthoDB" id="9803846at2"/>
<dbReference type="UniPathway" id="UPA00193"/>
<dbReference type="UniPathway" id="UPA00288">
    <property type="reaction ID" value="UER01023"/>
</dbReference>
<dbReference type="Proteomes" id="UP000001683">
    <property type="component" value="Chromosome"/>
</dbReference>
<dbReference type="GO" id="GO:0005829">
    <property type="term" value="C:cytosol"/>
    <property type="evidence" value="ECO:0007669"/>
    <property type="project" value="TreeGrafter"/>
</dbReference>
<dbReference type="GO" id="GO:0004372">
    <property type="term" value="F:glycine hydroxymethyltransferase activity"/>
    <property type="evidence" value="ECO:0007669"/>
    <property type="project" value="UniProtKB-UniRule"/>
</dbReference>
<dbReference type="GO" id="GO:0030170">
    <property type="term" value="F:pyridoxal phosphate binding"/>
    <property type="evidence" value="ECO:0007669"/>
    <property type="project" value="UniProtKB-UniRule"/>
</dbReference>
<dbReference type="GO" id="GO:0019264">
    <property type="term" value="P:glycine biosynthetic process from serine"/>
    <property type="evidence" value="ECO:0007669"/>
    <property type="project" value="UniProtKB-UniRule"/>
</dbReference>
<dbReference type="GO" id="GO:0035999">
    <property type="term" value="P:tetrahydrofolate interconversion"/>
    <property type="evidence" value="ECO:0007669"/>
    <property type="project" value="UniProtKB-UniRule"/>
</dbReference>
<dbReference type="CDD" id="cd00378">
    <property type="entry name" value="SHMT"/>
    <property type="match status" value="1"/>
</dbReference>
<dbReference type="FunFam" id="3.40.640.10:FF:000001">
    <property type="entry name" value="Serine hydroxymethyltransferase"/>
    <property type="match status" value="1"/>
</dbReference>
<dbReference type="FunFam" id="3.90.1150.10:FF:000003">
    <property type="entry name" value="Serine hydroxymethyltransferase"/>
    <property type="match status" value="1"/>
</dbReference>
<dbReference type="Gene3D" id="3.90.1150.10">
    <property type="entry name" value="Aspartate Aminotransferase, domain 1"/>
    <property type="match status" value="1"/>
</dbReference>
<dbReference type="Gene3D" id="3.40.640.10">
    <property type="entry name" value="Type I PLP-dependent aspartate aminotransferase-like (Major domain)"/>
    <property type="match status" value="1"/>
</dbReference>
<dbReference type="HAMAP" id="MF_00051">
    <property type="entry name" value="SHMT"/>
    <property type="match status" value="1"/>
</dbReference>
<dbReference type="InterPro" id="IPR015424">
    <property type="entry name" value="PyrdxlP-dep_Trfase"/>
</dbReference>
<dbReference type="InterPro" id="IPR015421">
    <property type="entry name" value="PyrdxlP-dep_Trfase_major"/>
</dbReference>
<dbReference type="InterPro" id="IPR015422">
    <property type="entry name" value="PyrdxlP-dep_Trfase_small"/>
</dbReference>
<dbReference type="InterPro" id="IPR001085">
    <property type="entry name" value="Ser_HO-MeTrfase"/>
</dbReference>
<dbReference type="InterPro" id="IPR049943">
    <property type="entry name" value="Ser_HO-MeTrfase-like"/>
</dbReference>
<dbReference type="InterPro" id="IPR019798">
    <property type="entry name" value="Ser_HO-MeTrfase_PLP_BS"/>
</dbReference>
<dbReference type="InterPro" id="IPR039429">
    <property type="entry name" value="SHMT-like_dom"/>
</dbReference>
<dbReference type="NCBIfam" id="NF000586">
    <property type="entry name" value="PRK00011.1"/>
    <property type="match status" value="1"/>
</dbReference>
<dbReference type="PANTHER" id="PTHR11680">
    <property type="entry name" value="SERINE HYDROXYMETHYLTRANSFERASE"/>
    <property type="match status" value="1"/>
</dbReference>
<dbReference type="PANTHER" id="PTHR11680:SF35">
    <property type="entry name" value="SERINE HYDROXYMETHYLTRANSFERASE 1"/>
    <property type="match status" value="1"/>
</dbReference>
<dbReference type="Pfam" id="PF00464">
    <property type="entry name" value="SHMT"/>
    <property type="match status" value="1"/>
</dbReference>
<dbReference type="PIRSF" id="PIRSF000412">
    <property type="entry name" value="SHMT"/>
    <property type="match status" value="1"/>
</dbReference>
<dbReference type="SUPFAM" id="SSF53383">
    <property type="entry name" value="PLP-dependent transferases"/>
    <property type="match status" value="1"/>
</dbReference>
<dbReference type="PROSITE" id="PS00096">
    <property type="entry name" value="SHMT"/>
    <property type="match status" value="1"/>
</dbReference>
<comment type="function">
    <text evidence="1">Catalyzes the reversible interconversion of serine and glycine with tetrahydrofolate (THF) serving as the one-carbon carrier. This reaction serves as the major source of one-carbon groups required for the biosynthesis of purines, thymidylate, methionine, and other important biomolecules. Also exhibits THF-independent aldolase activity toward beta-hydroxyamino acids, producing glycine and aldehydes, via a retro-aldol mechanism.</text>
</comment>
<comment type="catalytic activity">
    <reaction evidence="1">
        <text>(6R)-5,10-methylene-5,6,7,8-tetrahydrofolate + glycine + H2O = (6S)-5,6,7,8-tetrahydrofolate + L-serine</text>
        <dbReference type="Rhea" id="RHEA:15481"/>
        <dbReference type="ChEBI" id="CHEBI:15377"/>
        <dbReference type="ChEBI" id="CHEBI:15636"/>
        <dbReference type="ChEBI" id="CHEBI:33384"/>
        <dbReference type="ChEBI" id="CHEBI:57305"/>
        <dbReference type="ChEBI" id="CHEBI:57453"/>
        <dbReference type="EC" id="2.1.2.1"/>
    </reaction>
</comment>
<comment type="cofactor">
    <cofactor evidence="1">
        <name>pyridoxal 5'-phosphate</name>
        <dbReference type="ChEBI" id="CHEBI:597326"/>
    </cofactor>
</comment>
<comment type="pathway">
    <text evidence="1">One-carbon metabolism; tetrahydrofolate interconversion.</text>
</comment>
<comment type="pathway">
    <text evidence="1">Amino-acid biosynthesis; glycine biosynthesis; glycine from L-serine: step 1/1.</text>
</comment>
<comment type="subunit">
    <text evidence="1">Homodimer.</text>
</comment>
<comment type="subcellular location">
    <subcellularLocation>
        <location evidence="1">Cytoplasm</location>
    </subcellularLocation>
</comment>
<comment type="similarity">
    <text evidence="1">Belongs to the SHMT family.</text>
</comment>
<feature type="chain" id="PRO_1000091562" description="Serine hydroxymethyltransferase">
    <location>
        <begin position="1"/>
        <end position="412"/>
    </location>
</feature>
<feature type="binding site" evidence="1">
    <location>
        <position position="117"/>
    </location>
    <ligand>
        <name>(6S)-5,6,7,8-tetrahydrofolate</name>
        <dbReference type="ChEBI" id="CHEBI:57453"/>
    </ligand>
</feature>
<feature type="binding site" evidence="1">
    <location>
        <begin position="121"/>
        <end position="123"/>
    </location>
    <ligand>
        <name>(6S)-5,6,7,8-tetrahydrofolate</name>
        <dbReference type="ChEBI" id="CHEBI:57453"/>
    </ligand>
</feature>
<feature type="site" description="Plays an important role in substrate specificity" evidence="1">
    <location>
        <position position="225"/>
    </location>
</feature>
<feature type="modified residue" description="N6-(pyridoxal phosphate)lysine" evidence="1">
    <location>
        <position position="226"/>
    </location>
</feature>
<accession>B2A3H6</accession>
<organism>
    <name type="scientific">Natranaerobius thermophilus (strain ATCC BAA-1301 / DSM 18059 / JW/NM-WN-LF)</name>
    <dbReference type="NCBI Taxonomy" id="457570"/>
    <lineage>
        <taxon>Bacteria</taxon>
        <taxon>Bacillati</taxon>
        <taxon>Bacillota</taxon>
        <taxon>Clostridia</taxon>
        <taxon>Natranaerobiales</taxon>
        <taxon>Natranaerobiaceae</taxon>
        <taxon>Natranaerobius</taxon>
    </lineage>
</organism>
<reference key="1">
    <citation type="submission" date="2008-04" db="EMBL/GenBank/DDBJ databases">
        <title>Complete sequence of chromosome of Natranaerobius thermophilus JW/NM-WN-LF.</title>
        <authorList>
            <consortium name="US DOE Joint Genome Institute"/>
            <person name="Copeland A."/>
            <person name="Lucas S."/>
            <person name="Lapidus A."/>
            <person name="Glavina del Rio T."/>
            <person name="Dalin E."/>
            <person name="Tice H."/>
            <person name="Bruce D."/>
            <person name="Goodwin L."/>
            <person name="Pitluck S."/>
            <person name="Chertkov O."/>
            <person name="Brettin T."/>
            <person name="Detter J.C."/>
            <person name="Han C."/>
            <person name="Kuske C.R."/>
            <person name="Schmutz J."/>
            <person name="Larimer F."/>
            <person name="Land M."/>
            <person name="Hauser L."/>
            <person name="Kyrpides N."/>
            <person name="Lykidis A."/>
            <person name="Mesbah N.M."/>
            <person name="Wiegel J."/>
        </authorList>
    </citation>
    <scope>NUCLEOTIDE SEQUENCE [LARGE SCALE GENOMIC DNA]</scope>
    <source>
        <strain>ATCC BAA-1301 / DSM 18059 / JW/NM-WN-LF</strain>
    </source>
</reference>
<protein>
    <recommendedName>
        <fullName evidence="1">Serine hydroxymethyltransferase</fullName>
        <shortName evidence="1">SHMT</shortName>
        <shortName evidence="1">Serine methylase</shortName>
        <ecNumber evidence="1">2.1.2.1</ecNumber>
    </recommendedName>
</protein>
<proteinExistence type="inferred from homology"/>
<gene>
    <name evidence="1" type="primary">glyA</name>
    <name type="ordered locus">Nther_2858</name>
</gene>
<name>GLYA_NATTJ</name>
<evidence type="ECO:0000255" key="1">
    <source>
        <dbReference type="HAMAP-Rule" id="MF_00051"/>
    </source>
</evidence>
<keyword id="KW-0028">Amino-acid biosynthesis</keyword>
<keyword id="KW-0963">Cytoplasm</keyword>
<keyword id="KW-0554">One-carbon metabolism</keyword>
<keyword id="KW-0663">Pyridoxal phosphate</keyword>
<keyword id="KW-1185">Reference proteome</keyword>
<keyword id="KW-0808">Transferase</keyword>
<sequence>MENVKKTDPTIFSWIEEEWKRQEEGIELIASENFASRAVMEAQGSVLTNKYAEGYPGRRYYGGCQFVDKVEELAISRVKELFNADHANVQPHSGASANMGVYLAALKPGDTVLGMSLDHGGHLTHGSPVNISGKYFNFHHYGILEDTGKIDFDKVRELAKEHKPKMIVAGASAYPRIIDFATFREIADEVGAYLMVDMAHIAGLVAAGLHPNPVPYADFVTTTTHKTLRGPRGGVVLCKEEYKKEIDKAMFPGLQGGPLMHVIASKAVSFQEALSSEFKNYQKQVIKNASVLADELNNLGYDLVAGGSDNHLMLVDLQKKGVTGKKAERVLDDVHITVNKNAVPNDPEGPFVTSGLRLGTPAVTTRGFAEDEIKEVAQLLDKVITGLEDQENLEKCKKQVTDLCHRFPLYRQ</sequence>